<organism>
    <name type="scientific">Candida albicans</name>
    <name type="common">Yeast</name>
    <dbReference type="NCBI Taxonomy" id="5476"/>
    <lineage>
        <taxon>Eukaryota</taxon>
        <taxon>Fungi</taxon>
        <taxon>Dikarya</taxon>
        <taxon>Ascomycota</taxon>
        <taxon>Saccharomycotina</taxon>
        <taxon>Pichiomycetes</taxon>
        <taxon>Debaryomycetaceae</taxon>
        <taxon>Candida/Lodderomyces clade</taxon>
        <taxon>Candida</taxon>
    </lineage>
</organism>
<comment type="function">
    <text evidence="1">Required for synthesis of the major beta-glucans of the cell wall.</text>
</comment>
<comment type="subcellular location">
    <subcellularLocation>
        <location>Membrane</location>
        <topology>Single-pass type II membrane protein</topology>
    </subcellularLocation>
</comment>
<comment type="similarity">
    <text evidence="5">Belongs to the SKN1/KRE6 family.</text>
</comment>
<accession>P87024</accession>
<keyword id="KW-0961">Cell wall biogenesis/degradation</keyword>
<keyword id="KW-0325">Glycoprotein</keyword>
<keyword id="KW-0472">Membrane</keyword>
<keyword id="KW-0735">Signal-anchor</keyword>
<keyword id="KW-0812">Transmembrane</keyword>
<keyword id="KW-1133">Transmembrane helix</keyword>
<dbReference type="EMBL" id="D88491">
    <property type="protein sequence ID" value="BAA19594.1"/>
    <property type="molecule type" value="mRNA"/>
</dbReference>
<dbReference type="CAZy" id="GH16">
    <property type="family name" value="Glycoside Hydrolase Family 16"/>
</dbReference>
<dbReference type="GlyCosmos" id="P87024">
    <property type="glycosylation" value="6 sites, No reported glycans"/>
</dbReference>
<dbReference type="EnsemblFungi" id="C3_05810C_A-T">
    <property type="protein sequence ID" value="C3_05810C_A-T-p1"/>
    <property type="gene ID" value="C3_05810C_A"/>
</dbReference>
<dbReference type="CGD" id="CAL0000200054">
    <property type="gene designation" value="SKN1"/>
</dbReference>
<dbReference type="VEuPathDB" id="FungiDB:C3_05810C_A"/>
<dbReference type="VEuPathDB" id="FungiDB:CAWG_02891"/>
<dbReference type="OMA" id="AHIEAYT"/>
<dbReference type="PhylomeDB" id="P87024"/>
<dbReference type="PHI-base" id="PHI:8715"/>
<dbReference type="GO" id="GO:0005789">
    <property type="term" value="C:endoplasmic reticulum membrane"/>
    <property type="evidence" value="ECO:0007669"/>
    <property type="project" value="TreeGrafter"/>
</dbReference>
<dbReference type="GO" id="GO:0005886">
    <property type="term" value="C:plasma membrane"/>
    <property type="evidence" value="ECO:0007669"/>
    <property type="project" value="TreeGrafter"/>
</dbReference>
<dbReference type="GO" id="GO:0015926">
    <property type="term" value="F:glucosidase activity"/>
    <property type="evidence" value="ECO:0007669"/>
    <property type="project" value="TreeGrafter"/>
</dbReference>
<dbReference type="GO" id="GO:0006078">
    <property type="term" value="P:(1-&gt;6)-beta-D-glucan biosynthetic process"/>
    <property type="evidence" value="ECO:0007669"/>
    <property type="project" value="TreeGrafter"/>
</dbReference>
<dbReference type="GO" id="GO:0031505">
    <property type="term" value="P:fungal-type cell wall organization"/>
    <property type="evidence" value="ECO:0000315"/>
    <property type="project" value="CGD"/>
</dbReference>
<dbReference type="CDD" id="cd02180">
    <property type="entry name" value="GH16_fungal_KRE6_glucanase"/>
    <property type="match status" value="1"/>
</dbReference>
<dbReference type="FunFam" id="2.60.120.200:FF:000140">
    <property type="entry name" value="Beta-glucan synthesis-associated protein"/>
    <property type="match status" value="1"/>
</dbReference>
<dbReference type="Gene3D" id="2.60.120.200">
    <property type="match status" value="2"/>
</dbReference>
<dbReference type="InterPro" id="IPR013320">
    <property type="entry name" value="ConA-like_dom_sf"/>
</dbReference>
<dbReference type="InterPro" id="IPR000757">
    <property type="entry name" value="GH16"/>
</dbReference>
<dbReference type="InterPro" id="IPR005629">
    <property type="entry name" value="Skn1/Kre6/Sbg1"/>
</dbReference>
<dbReference type="PANTHER" id="PTHR31361">
    <property type="entry name" value="BETA-GLUCAN SYNTHESIS-ASSOCIATED PROTEIN KRE6-RELATED"/>
    <property type="match status" value="1"/>
</dbReference>
<dbReference type="PANTHER" id="PTHR31361:SF1">
    <property type="entry name" value="BETA-GLUCAN SYNTHESIS-ASSOCIATED PROTEIN KRE6-RELATED"/>
    <property type="match status" value="1"/>
</dbReference>
<dbReference type="Pfam" id="PF03935">
    <property type="entry name" value="SKN1_KRE6_Sbg1"/>
    <property type="match status" value="1"/>
</dbReference>
<dbReference type="SUPFAM" id="SSF49899">
    <property type="entry name" value="Concanavalin A-like lectins/glucanases"/>
    <property type="match status" value="1"/>
</dbReference>
<dbReference type="PROSITE" id="PS51762">
    <property type="entry name" value="GH16_2"/>
    <property type="match status" value="1"/>
</dbReference>
<evidence type="ECO:0000250" key="1"/>
<evidence type="ECO:0000255" key="2"/>
<evidence type="ECO:0000255" key="3">
    <source>
        <dbReference type="PROSITE-ProRule" id="PRU01098"/>
    </source>
</evidence>
<evidence type="ECO:0000256" key="4">
    <source>
        <dbReference type="SAM" id="MobiDB-lite"/>
    </source>
</evidence>
<evidence type="ECO:0000305" key="5"/>
<feature type="chain" id="PRO_0000097779" description="Beta-glucan synthesis-associated protein SKN1">
    <location>
        <begin position="1"/>
        <end position="737"/>
    </location>
</feature>
<feature type="topological domain" description="Cytoplasmic" evidence="2">
    <location>
        <begin position="1"/>
        <end position="281"/>
    </location>
</feature>
<feature type="transmembrane region" description="Helical; Signal-anchor for type II membrane protein" evidence="2">
    <location>
        <begin position="282"/>
        <end position="302"/>
    </location>
</feature>
<feature type="topological domain" description="Lumenal" evidence="2">
    <location>
        <begin position="303"/>
        <end position="737"/>
    </location>
</feature>
<feature type="domain" description="GH16" evidence="3">
    <location>
        <begin position="348"/>
        <end position="691"/>
    </location>
</feature>
<feature type="region of interest" description="Disordered" evidence="4">
    <location>
        <begin position="1"/>
        <end position="215"/>
    </location>
</feature>
<feature type="compositionally biased region" description="Basic and acidic residues" evidence="4">
    <location>
        <begin position="13"/>
        <end position="25"/>
    </location>
</feature>
<feature type="compositionally biased region" description="Polar residues" evidence="4">
    <location>
        <begin position="27"/>
        <end position="53"/>
    </location>
</feature>
<feature type="compositionally biased region" description="Low complexity" evidence="4">
    <location>
        <begin position="90"/>
        <end position="102"/>
    </location>
</feature>
<feature type="compositionally biased region" description="Polar residues" evidence="4">
    <location>
        <begin position="103"/>
        <end position="136"/>
    </location>
</feature>
<feature type="compositionally biased region" description="Polar residues" evidence="4">
    <location>
        <begin position="145"/>
        <end position="164"/>
    </location>
</feature>
<feature type="compositionally biased region" description="Low complexity" evidence="4">
    <location>
        <begin position="175"/>
        <end position="215"/>
    </location>
</feature>
<feature type="glycosylation site" description="N-linked (GlcNAc...) asparagine" evidence="2">
    <location>
        <position position="403"/>
    </location>
</feature>
<feature type="glycosylation site" description="N-linked (GlcNAc...) asparagine" evidence="2">
    <location>
        <position position="449"/>
    </location>
</feature>
<feature type="glycosylation site" description="N-linked (GlcNAc...) asparagine" evidence="2">
    <location>
        <position position="490"/>
    </location>
</feature>
<feature type="glycosylation site" description="N-linked (GlcNAc...) asparagine" evidence="2">
    <location>
        <position position="565"/>
    </location>
</feature>
<feature type="glycosylation site" description="N-linked (GlcNAc...) asparagine" evidence="2">
    <location>
        <position position="590"/>
    </location>
</feature>
<feature type="glycosylation site" description="N-linked (GlcNAc...) asparagine" evidence="2">
    <location>
        <position position="718"/>
    </location>
</feature>
<name>SKN1_CANAX</name>
<reference key="1">
    <citation type="journal article" date="1997" name="J. Bacteriol.">
        <title>Isolation of the Candida albicans homologs of Saccharomyces cerevisiae KRE6 and SKN1: expression and physiological function.</title>
        <authorList>
            <person name="Mio T."/>
            <person name="Yamada-Okabe T."/>
            <person name="Yabe T."/>
            <person name="Nakajima T."/>
            <person name="Arisawa M."/>
            <person name="Yamada-Okabe H."/>
        </authorList>
    </citation>
    <scope>NUCLEOTIDE SEQUENCE [MRNA]</scope>
</reference>
<proteinExistence type="evidence at transcript level"/>
<protein>
    <recommendedName>
        <fullName>Beta-glucan synthesis-associated protein SKN1</fullName>
    </recommendedName>
</protein>
<gene>
    <name type="primary">SKN1</name>
</gene>
<sequence>MERDLTYNAPKIKFTDTEGQEEHFYFNRSNNSTNDLTSHDSSSTQLQDANSRRQAPPPPPHNPFSDNSHENSTESLYQSETRFHQPLLHNDSNNSNSSIGNNRQRIPSQQHDTSSLYSASPISTSPLVSNFQSYSDNQDEMTRGKYNQNTNRSSSNYIQHSPTSAGYDRYPLKTQSSIGGSMSRIGLSSSSPSQQQQQHMYDNNSSNRSSYSPDSATDLMVYENGEFSPFGGYPASLFPLSIDEKEPDDYLHNPDPVQDAEYDKNRFLYDLKTMDKKSMNGLIAFIVMFLIAIAIFIILPVFTYTGYNPKAKNFENYEVLTRYSYPRLSAIRTSLIDPDTPEDALFWKSKNGEEWPLVFSDEFNAEGRTFYEGDDQFFTAPDLHYDATKDLEWYDPDAVTTANGTLTLRMDAFKNHGLFYRSGMIQSWNQMCFTQGKLEFSAKLPGYGNITGFWPGLWSMGNLGRPGYLASTEGVWPYTYDSCDAGITPNQSSPDGISYLPGQRLNKCTCPGEAHPNRGVGRGAPEIDALEGEIHGVIGRVSQSLQVAPYDIWYMPNYDFLEIHNSSITLMNTYAGGPFQQAISGVTMLNVTWYEYGDHQHNFQKYGYEYLNDDESGYLRWFVGDNPTFTIYSQALHPNGNVGWRKLPKEPLSLILNFGISNNWAYIDWPSLVFPSTMRVDYVRVYQPKDQINVGCDPTDFPTYDYIQQHLNVYQNVNLTKFEDGGYTFPKHKLIGC</sequence>